<accession>C1JJY5</accession>
<organism>
    <name type="scientific">Halorubrum pleomorphic virus 1</name>
    <name type="common">HRPV-1</name>
    <dbReference type="NCBI Taxonomy" id="634168"/>
    <lineage>
        <taxon>Viruses</taxon>
        <taxon>Monodnaviria</taxon>
        <taxon>Trapavirae</taxon>
        <taxon>Saleviricota</taxon>
        <taxon>Huolimaviricetes</taxon>
        <taxon>Haloruvirales</taxon>
        <taxon>Pleolipoviridae</taxon>
        <taxon>Alphapleolipovirus</taxon>
        <taxon>Alphapleolipovirus finnoniense</taxon>
    </lineage>
</organism>
<reference key="1">
    <citation type="journal article" date="2009" name="Mol. Microbiol.">
        <title>An ssDNA virus infecting archaea: a new lineage of viruses with a membrane envelope.</title>
        <authorList>
            <person name="Pietila M.K."/>
            <person name="Roine E."/>
            <person name="Paulin L."/>
            <person name="Kalkkinen N."/>
            <person name="Bamford D.H."/>
        </authorList>
    </citation>
    <scope>NUCLEOTIDE SEQUENCE [GENOMIC DNA]</scope>
</reference>
<feature type="signal peptide" evidence="1">
    <location>
        <begin position="1"/>
        <end position="22"/>
    </location>
</feature>
<feature type="chain" id="PRO_0000420965" description="Uncharacterized protein 6">
    <location>
        <begin position="23"/>
        <end position="181"/>
    </location>
</feature>
<name>ORF6_HAPV1</name>
<proteinExistence type="inferred from homology"/>
<keyword id="KW-1185">Reference proteome</keyword>
<keyword id="KW-0732">Signal</keyword>
<dbReference type="EMBL" id="FJ685651">
    <property type="protein sequence ID" value="ACO54901.1"/>
    <property type="molecule type" value="Genomic_DNA"/>
</dbReference>
<dbReference type="RefSeq" id="YP_002791891.1">
    <property type="nucleotide sequence ID" value="NC_012558.1"/>
</dbReference>
<dbReference type="KEGG" id="vg:7755266"/>
<dbReference type="Proteomes" id="UP000009401">
    <property type="component" value="Genome"/>
</dbReference>
<gene>
    <name type="ORF">ORF6</name>
</gene>
<protein>
    <recommendedName>
        <fullName>Uncharacterized protein 6</fullName>
    </recommendedName>
</protein>
<sequence>MNKKSLLVVLVIALAVVPFAATAQTTPGQNQTAPNSSSPTVISQVDSITAITDYELRDGDLWIQFQSSGGNTLSITETAGSEGATQVRVRSVDIPRGTSTVTIDLFNSADGSVLITSRLSLEQNSGTVVSVSGGSAIISGPFTASDAQASGLGAAISVASVTLLLVFRASRGESTEGERIA</sequence>
<evidence type="ECO:0000255" key="1"/>
<organismHost>
    <name type="scientific">Halorubrum sp. PV6</name>
    <dbReference type="NCBI Taxonomy" id="634157"/>
</organismHost>